<comment type="function">
    <text evidence="1">Catalyzes the transfer of the diacylglyceryl group from phosphatidylglycerol to the sulfhydryl group of the N-terminal cysteine of a prolipoprotein, the first step in the formation of mature lipoproteins.</text>
</comment>
<comment type="catalytic activity">
    <reaction evidence="1">
        <text>L-cysteinyl-[prolipoprotein] + a 1,2-diacyl-sn-glycero-3-phospho-(1'-sn-glycerol) = an S-1,2-diacyl-sn-glyceryl-L-cysteinyl-[prolipoprotein] + sn-glycerol 1-phosphate + H(+)</text>
        <dbReference type="Rhea" id="RHEA:56712"/>
        <dbReference type="Rhea" id="RHEA-COMP:14679"/>
        <dbReference type="Rhea" id="RHEA-COMP:14680"/>
        <dbReference type="ChEBI" id="CHEBI:15378"/>
        <dbReference type="ChEBI" id="CHEBI:29950"/>
        <dbReference type="ChEBI" id="CHEBI:57685"/>
        <dbReference type="ChEBI" id="CHEBI:64716"/>
        <dbReference type="ChEBI" id="CHEBI:140658"/>
        <dbReference type="EC" id="2.5.1.145"/>
    </reaction>
</comment>
<comment type="pathway">
    <text evidence="1">Protein modification; lipoprotein biosynthesis (diacylglyceryl transfer).</text>
</comment>
<comment type="subcellular location">
    <subcellularLocation>
        <location evidence="1">Cell inner membrane</location>
        <topology evidence="1">Multi-pass membrane protein</topology>
    </subcellularLocation>
</comment>
<comment type="similarity">
    <text evidence="1">Belongs to the Lgt family.</text>
</comment>
<organism>
    <name type="scientific">Legionella pneumophila (strain Paris)</name>
    <dbReference type="NCBI Taxonomy" id="297246"/>
    <lineage>
        <taxon>Bacteria</taxon>
        <taxon>Pseudomonadati</taxon>
        <taxon>Pseudomonadota</taxon>
        <taxon>Gammaproteobacteria</taxon>
        <taxon>Legionellales</taxon>
        <taxon>Legionellaceae</taxon>
        <taxon>Legionella</taxon>
    </lineage>
</organism>
<keyword id="KW-0997">Cell inner membrane</keyword>
<keyword id="KW-1003">Cell membrane</keyword>
<keyword id="KW-0472">Membrane</keyword>
<keyword id="KW-0808">Transferase</keyword>
<keyword id="KW-0812">Transmembrane</keyword>
<keyword id="KW-1133">Transmembrane helix</keyword>
<accession>Q5X118</accession>
<feature type="chain" id="PRO_0000172620" description="Phosphatidylglycerol--prolipoprotein diacylglyceryl transferase">
    <location>
        <begin position="1"/>
        <end position="256"/>
    </location>
</feature>
<feature type="transmembrane region" description="Helical" evidence="1">
    <location>
        <begin position="19"/>
        <end position="39"/>
    </location>
</feature>
<feature type="transmembrane region" description="Helical" evidence="1">
    <location>
        <begin position="56"/>
        <end position="76"/>
    </location>
</feature>
<feature type="transmembrane region" description="Helical" evidence="1">
    <location>
        <begin position="91"/>
        <end position="111"/>
    </location>
</feature>
<feature type="transmembrane region" description="Helical" evidence="1">
    <location>
        <begin position="231"/>
        <end position="251"/>
    </location>
</feature>
<feature type="binding site" evidence="1">
    <location>
        <position position="139"/>
    </location>
    <ligand>
        <name>a 1,2-diacyl-sn-glycero-3-phospho-(1'-sn-glycerol)</name>
        <dbReference type="ChEBI" id="CHEBI:64716"/>
    </ligand>
</feature>
<sequence>MLTYPNINPIAFSLGPLKVHWYGLMYLIGFIGAWLLGYWRIKHYKLNWNNDQLSDLIFYSALGVILGGRVGYMLFYDIQEFIHHPWVLFKIWEGGMSFHGGLLGVVIAAWLFCRKYGKTFLEVGDFVAPLVPLGLAAGRLGNFINGELWGRVTDVPWGMIYPHVDDQPRHPSQLYEFGLEGVALFILIWCYASKPRQQGRVCALFLMGYAICRLIAESFRQPDSQLGFVAFGWLTMGQVLSIPMLLIGIWLWWAKR</sequence>
<reference key="1">
    <citation type="journal article" date="2004" name="Nat. Genet.">
        <title>Evidence in the Legionella pneumophila genome for exploitation of host cell functions and high genome plasticity.</title>
        <authorList>
            <person name="Cazalet C."/>
            <person name="Rusniok C."/>
            <person name="Brueggemann H."/>
            <person name="Zidane N."/>
            <person name="Magnier A."/>
            <person name="Ma L."/>
            <person name="Tichit M."/>
            <person name="Jarraud S."/>
            <person name="Bouchier C."/>
            <person name="Vandenesch F."/>
            <person name="Kunst F."/>
            <person name="Etienne J."/>
            <person name="Glaser P."/>
            <person name="Buchrieser C."/>
        </authorList>
    </citation>
    <scope>NUCLEOTIDE SEQUENCE [LARGE SCALE GENOMIC DNA]</scope>
    <source>
        <strain>Paris</strain>
    </source>
</reference>
<dbReference type="EC" id="2.5.1.145" evidence="1"/>
<dbReference type="EMBL" id="CR628336">
    <property type="protein sequence ID" value="CAH14081.1"/>
    <property type="molecule type" value="Genomic_DNA"/>
</dbReference>
<dbReference type="RefSeq" id="WP_015961867.1">
    <property type="nucleotide sequence ID" value="NC_006368.1"/>
</dbReference>
<dbReference type="SMR" id="Q5X118"/>
<dbReference type="KEGG" id="lpp:lpp2928"/>
<dbReference type="LegioList" id="lpp2928"/>
<dbReference type="HOGENOM" id="CLU_013386_1_0_6"/>
<dbReference type="UniPathway" id="UPA00664"/>
<dbReference type="GO" id="GO:0005886">
    <property type="term" value="C:plasma membrane"/>
    <property type="evidence" value="ECO:0007669"/>
    <property type="project" value="UniProtKB-SubCell"/>
</dbReference>
<dbReference type="GO" id="GO:0008961">
    <property type="term" value="F:phosphatidylglycerol-prolipoprotein diacylglyceryl transferase activity"/>
    <property type="evidence" value="ECO:0007669"/>
    <property type="project" value="UniProtKB-UniRule"/>
</dbReference>
<dbReference type="GO" id="GO:0042158">
    <property type="term" value="P:lipoprotein biosynthetic process"/>
    <property type="evidence" value="ECO:0007669"/>
    <property type="project" value="UniProtKB-UniRule"/>
</dbReference>
<dbReference type="HAMAP" id="MF_01147">
    <property type="entry name" value="Lgt"/>
    <property type="match status" value="1"/>
</dbReference>
<dbReference type="InterPro" id="IPR001640">
    <property type="entry name" value="Lgt"/>
</dbReference>
<dbReference type="NCBIfam" id="TIGR00544">
    <property type="entry name" value="lgt"/>
    <property type="match status" value="1"/>
</dbReference>
<dbReference type="PANTHER" id="PTHR30589:SF0">
    <property type="entry name" value="PHOSPHATIDYLGLYCEROL--PROLIPOPROTEIN DIACYLGLYCERYL TRANSFERASE"/>
    <property type="match status" value="1"/>
</dbReference>
<dbReference type="PANTHER" id="PTHR30589">
    <property type="entry name" value="PROLIPOPROTEIN DIACYLGLYCERYL TRANSFERASE"/>
    <property type="match status" value="1"/>
</dbReference>
<dbReference type="Pfam" id="PF01790">
    <property type="entry name" value="LGT"/>
    <property type="match status" value="1"/>
</dbReference>
<dbReference type="PROSITE" id="PS01311">
    <property type="entry name" value="LGT"/>
    <property type="match status" value="1"/>
</dbReference>
<name>LGT_LEGPA</name>
<gene>
    <name evidence="1" type="primary">lgt</name>
    <name type="ordered locus">lpp2928</name>
</gene>
<protein>
    <recommendedName>
        <fullName evidence="1">Phosphatidylglycerol--prolipoprotein diacylglyceryl transferase</fullName>
        <ecNumber evidence="1">2.5.1.145</ecNumber>
    </recommendedName>
</protein>
<proteinExistence type="inferred from homology"/>
<evidence type="ECO:0000255" key="1">
    <source>
        <dbReference type="HAMAP-Rule" id="MF_01147"/>
    </source>
</evidence>